<comment type="subcellular location">
    <subcellularLocation>
        <location evidence="3">Membrane</location>
        <topology evidence="3">Single-pass type I membrane protein</topology>
    </subcellularLocation>
</comment>
<comment type="alternative products">
    <event type="alternative splicing"/>
    <isoform>
        <id>Q0VAY3-1</id>
        <name>1</name>
        <sequence type="displayed"/>
    </isoform>
    <isoform>
        <id>Q0VAY3-2</id>
        <name>2</name>
        <sequence type="described" ref="VSP_024580"/>
    </isoform>
</comment>
<comment type="similarity">
    <text evidence="3">Belongs to the FAM187 family.</text>
</comment>
<proteinExistence type="evidence at transcript level"/>
<gene>
    <name type="primary">Fam187b</name>
    <name type="synonym">Tmem162</name>
</gene>
<accession>Q0VAY3</accession>
<accession>Q3UFH7</accession>
<dbReference type="EMBL" id="AK148492">
    <property type="protein sequence ID" value="BAE28584.1"/>
    <property type="molecule type" value="mRNA"/>
</dbReference>
<dbReference type="EMBL" id="BC120864">
    <property type="protein sequence ID" value="AAI20865.1"/>
    <property type="molecule type" value="mRNA"/>
</dbReference>
<dbReference type="EMBL" id="BC125560">
    <property type="protein sequence ID" value="AAI25561.1"/>
    <property type="molecule type" value="mRNA"/>
</dbReference>
<dbReference type="CCDS" id="CCDS21120.1">
    <molecule id="Q0VAY3-1"/>
</dbReference>
<dbReference type="RefSeq" id="NP_001363965.1">
    <molecule id="Q0VAY3-2"/>
    <property type="nucleotide sequence ID" value="NM_001377036.1"/>
</dbReference>
<dbReference type="RefSeq" id="NP_780449.2">
    <molecule id="Q0VAY3-1"/>
    <property type="nucleotide sequence ID" value="NM_175240.5"/>
</dbReference>
<dbReference type="RefSeq" id="XP_036009432.1">
    <molecule id="Q0VAY3-2"/>
    <property type="nucleotide sequence ID" value="XM_036153539.1"/>
</dbReference>
<dbReference type="RefSeq" id="XP_036009433.1">
    <molecule id="Q0VAY3-2"/>
    <property type="nucleotide sequence ID" value="XM_036153540.1"/>
</dbReference>
<dbReference type="STRING" id="10090.ENSMUSP00000057020"/>
<dbReference type="GlyCosmos" id="Q0VAY3">
    <property type="glycosylation" value="1 site, No reported glycans"/>
</dbReference>
<dbReference type="GlyGen" id="Q0VAY3">
    <property type="glycosylation" value="1 site"/>
</dbReference>
<dbReference type="iPTMnet" id="Q0VAY3"/>
<dbReference type="PhosphoSitePlus" id="Q0VAY3"/>
<dbReference type="SwissPalm" id="Q0VAY3"/>
<dbReference type="PaxDb" id="10090-ENSMUSP00000057020"/>
<dbReference type="ProteomicsDB" id="275987">
    <molecule id="Q0VAY3-1"/>
</dbReference>
<dbReference type="Antibodypedia" id="3047">
    <property type="antibodies" value="41 antibodies from 11 providers"/>
</dbReference>
<dbReference type="DNASU" id="76415"/>
<dbReference type="Ensembl" id="ENSMUST00000058093.6">
    <molecule id="Q0VAY3-1"/>
    <property type="protein sequence ID" value="ENSMUSP00000057020.5"/>
    <property type="gene ID" value="ENSMUSG00000046826.8"/>
</dbReference>
<dbReference type="Ensembl" id="ENSMUST00000129773.2">
    <molecule id="Q0VAY3-2"/>
    <property type="protein sequence ID" value="ENSMUSP00000144533.2"/>
    <property type="gene ID" value="ENSMUSG00000046826.8"/>
</dbReference>
<dbReference type="GeneID" id="76415"/>
<dbReference type="KEGG" id="mmu:76415"/>
<dbReference type="UCSC" id="uc009ghn.2">
    <molecule id="Q0VAY3-1"/>
    <property type="organism name" value="mouse"/>
</dbReference>
<dbReference type="AGR" id="MGI:1923665"/>
<dbReference type="CTD" id="148109"/>
<dbReference type="MGI" id="MGI:1923665">
    <property type="gene designation" value="Fam187b"/>
</dbReference>
<dbReference type="VEuPathDB" id="HostDB:ENSMUSG00000046826"/>
<dbReference type="eggNOG" id="ENOG502S0YJ">
    <property type="taxonomic scope" value="Eukaryota"/>
</dbReference>
<dbReference type="GeneTree" id="ENSGT00530000063991"/>
<dbReference type="InParanoid" id="Q0VAY3"/>
<dbReference type="OMA" id="EACHVQC"/>
<dbReference type="PhylomeDB" id="Q0VAY3"/>
<dbReference type="TreeFam" id="TF332178"/>
<dbReference type="BioGRID-ORCS" id="76415">
    <property type="hits" value="3 hits in 75 CRISPR screens"/>
</dbReference>
<dbReference type="PRO" id="PR:Q0VAY3"/>
<dbReference type="Proteomes" id="UP000000589">
    <property type="component" value="Chromosome 7"/>
</dbReference>
<dbReference type="RNAct" id="Q0VAY3">
    <property type="molecule type" value="protein"/>
</dbReference>
<dbReference type="Bgee" id="ENSMUSG00000046826">
    <property type="expression patterns" value="Expressed in spermatid and 49 other cell types or tissues"/>
</dbReference>
<dbReference type="ExpressionAtlas" id="Q0VAY3">
    <property type="expression patterns" value="baseline and differential"/>
</dbReference>
<dbReference type="GO" id="GO:0016020">
    <property type="term" value="C:membrane"/>
    <property type="evidence" value="ECO:0007669"/>
    <property type="project" value="UniProtKB-SubCell"/>
</dbReference>
<dbReference type="InterPro" id="IPR039311">
    <property type="entry name" value="FAM187A/B"/>
</dbReference>
<dbReference type="InterPro" id="IPR036179">
    <property type="entry name" value="Ig-like_dom_sf"/>
</dbReference>
<dbReference type="PANTHER" id="PTHR32178">
    <property type="entry name" value="FAM187"/>
    <property type="match status" value="1"/>
</dbReference>
<dbReference type="PANTHER" id="PTHR32178:SF8">
    <property type="entry name" value="PROTEIN FAM187B"/>
    <property type="match status" value="1"/>
</dbReference>
<dbReference type="SUPFAM" id="SSF48726">
    <property type="entry name" value="Immunoglobulin"/>
    <property type="match status" value="1"/>
</dbReference>
<keyword id="KW-0025">Alternative splicing</keyword>
<keyword id="KW-0325">Glycoprotein</keyword>
<keyword id="KW-0472">Membrane</keyword>
<keyword id="KW-1185">Reference proteome</keyword>
<keyword id="KW-0732">Signal</keyword>
<keyword id="KW-0812">Transmembrane</keyword>
<keyword id="KW-1133">Transmembrane helix</keyword>
<protein>
    <recommendedName>
        <fullName>Protein FAM187B</fullName>
    </recommendedName>
    <alternativeName>
        <fullName>Transmembrane protein 162</fullName>
    </alternativeName>
</protein>
<name>F187B_MOUSE</name>
<reference key="1">
    <citation type="journal article" date="2005" name="Science">
        <title>The transcriptional landscape of the mammalian genome.</title>
        <authorList>
            <person name="Carninci P."/>
            <person name="Kasukawa T."/>
            <person name="Katayama S."/>
            <person name="Gough J."/>
            <person name="Frith M.C."/>
            <person name="Maeda N."/>
            <person name="Oyama R."/>
            <person name="Ravasi T."/>
            <person name="Lenhard B."/>
            <person name="Wells C."/>
            <person name="Kodzius R."/>
            <person name="Shimokawa K."/>
            <person name="Bajic V.B."/>
            <person name="Brenner S.E."/>
            <person name="Batalov S."/>
            <person name="Forrest A.R."/>
            <person name="Zavolan M."/>
            <person name="Davis M.J."/>
            <person name="Wilming L.G."/>
            <person name="Aidinis V."/>
            <person name="Allen J.E."/>
            <person name="Ambesi-Impiombato A."/>
            <person name="Apweiler R."/>
            <person name="Aturaliya R.N."/>
            <person name="Bailey T.L."/>
            <person name="Bansal M."/>
            <person name="Baxter L."/>
            <person name="Beisel K.W."/>
            <person name="Bersano T."/>
            <person name="Bono H."/>
            <person name="Chalk A.M."/>
            <person name="Chiu K.P."/>
            <person name="Choudhary V."/>
            <person name="Christoffels A."/>
            <person name="Clutterbuck D.R."/>
            <person name="Crowe M.L."/>
            <person name="Dalla E."/>
            <person name="Dalrymple B.P."/>
            <person name="de Bono B."/>
            <person name="Della Gatta G."/>
            <person name="di Bernardo D."/>
            <person name="Down T."/>
            <person name="Engstrom P."/>
            <person name="Fagiolini M."/>
            <person name="Faulkner G."/>
            <person name="Fletcher C.F."/>
            <person name="Fukushima T."/>
            <person name="Furuno M."/>
            <person name="Futaki S."/>
            <person name="Gariboldi M."/>
            <person name="Georgii-Hemming P."/>
            <person name="Gingeras T.R."/>
            <person name="Gojobori T."/>
            <person name="Green R.E."/>
            <person name="Gustincich S."/>
            <person name="Harbers M."/>
            <person name="Hayashi Y."/>
            <person name="Hensch T.K."/>
            <person name="Hirokawa N."/>
            <person name="Hill D."/>
            <person name="Huminiecki L."/>
            <person name="Iacono M."/>
            <person name="Ikeo K."/>
            <person name="Iwama A."/>
            <person name="Ishikawa T."/>
            <person name="Jakt M."/>
            <person name="Kanapin A."/>
            <person name="Katoh M."/>
            <person name="Kawasawa Y."/>
            <person name="Kelso J."/>
            <person name="Kitamura H."/>
            <person name="Kitano H."/>
            <person name="Kollias G."/>
            <person name="Krishnan S.P."/>
            <person name="Kruger A."/>
            <person name="Kummerfeld S.K."/>
            <person name="Kurochkin I.V."/>
            <person name="Lareau L.F."/>
            <person name="Lazarevic D."/>
            <person name="Lipovich L."/>
            <person name="Liu J."/>
            <person name="Liuni S."/>
            <person name="McWilliam S."/>
            <person name="Madan Babu M."/>
            <person name="Madera M."/>
            <person name="Marchionni L."/>
            <person name="Matsuda H."/>
            <person name="Matsuzawa S."/>
            <person name="Miki H."/>
            <person name="Mignone F."/>
            <person name="Miyake S."/>
            <person name="Morris K."/>
            <person name="Mottagui-Tabar S."/>
            <person name="Mulder N."/>
            <person name="Nakano N."/>
            <person name="Nakauchi H."/>
            <person name="Ng P."/>
            <person name="Nilsson R."/>
            <person name="Nishiguchi S."/>
            <person name="Nishikawa S."/>
            <person name="Nori F."/>
            <person name="Ohara O."/>
            <person name="Okazaki Y."/>
            <person name="Orlando V."/>
            <person name="Pang K.C."/>
            <person name="Pavan W.J."/>
            <person name="Pavesi G."/>
            <person name="Pesole G."/>
            <person name="Petrovsky N."/>
            <person name="Piazza S."/>
            <person name="Reed J."/>
            <person name="Reid J.F."/>
            <person name="Ring B.Z."/>
            <person name="Ringwald M."/>
            <person name="Rost B."/>
            <person name="Ruan Y."/>
            <person name="Salzberg S.L."/>
            <person name="Sandelin A."/>
            <person name="Schneider C."/>
            <person name="Schoenbach C."/>
            <person name="Sekiguchi K."/>
            <person name="Semple C.A."/>
            <person name="Seno S."/>
            <person name="Sessa L."/>
            <person name="Sheng Y."/>
            <person name="Shibata Y."/>
            <person name="Shimada H."/>
            <person name="Shimada K."/>
            <person name="Silva D."/>
            <person name="Sinclair B."/>
            <person name="Sperling S."/>
            <person name="Stupka E."/>
            <person name="Sugiura K."/>
            <person name="Sultana R."/>
            <person name="Takenaka Y."/>
            <person name="Taki K."/>
            <person name="Tammoja K."/>
            <person name="Tan S.L."/>
            <person name="Tang S."/>
            <person name="Taylor M.S."/>
            <person name="Tegner J."/>
            <person name="Teichmann S.A."/>
            <person name="Ueda H.R."/>
            <person name="van Nimwegen E."/>
            <person name="Verardo R."/>
            <person name="Wei C.L."/>
            <person name="Yagi K."/>
            <person name="Yamanishi H."/>
            <person name="Zabarovsky E."/>
            <person name="Zhu S."/>
            <person name="Zimmer A."/>
            <person name="Hide W."/>
            <person name="Bult C."/>
            <person name="Grimmond S.M."/>
            <person name="Teasdale R.D."/>
            <person name="Liu E.T."/>
            <person name="Brusic V."/>
            <person name="Quackenbush J."/>
            <person name="Wahlestedt C."/>
            <person name="Mattick J.S."/>
            <person name="Hume D.A."/>
            <person name="Kai C."/>
            <person name="Sasaki D."/>
            <person name="Tomaru Y."/>
            <person name="Fukuda S."/>
            <person name="Kanamori-Katayama M."/>
            <person name="Suzuki M."/>
            <person name="Aoki J."/>
            <person name="Arakawa T."/>
            <person name="Iida J."/>
            <person name="Imamura K."/>
            <person name="Itoh M."/>
            <person name="Kato T."/>
            <person name="Kawaji H."/>
            <person name="Kawagashira N."/>
            <person name="Kawashima T."/>
            <person name="Kojima M."/>
            <person name="Kondo S."/>
            <person name="Konno H."/>
            <person name="Nakano K."/>
            <person name="Ninomiya N."/>
            <person name="Nishio T."/>
            <person name="Okada M."/>
            <person name="Plessy C."/>
            <person name="Shibata K."/>
            <person name="Shiraki T."/>
            <person name="Suzuki S."/>
            <person name="Tagami M."/>
            <person name="Waki K."/>
            <person name="Watahiki A."/>
            <person name="Okamura-Oho Y."/>
            <person name="Suzuki H."/>
            <person name="Kawai J."/>
            <person name="Hayashizaki Y."/>
        </authorList>
    </citation>
    <scope>NUCLEOTIDE SEQUENCE [LARGE SCALE MRNA] (ISOFORM 2)</scope>
    <source>
        <strain>C57BL/6J</strain>
        <tissue>Pancreas</tissue>
        <tissue>Testis</tissue>
    </source>
</reference>
<reference key="2">
    <citation type="journal article" date="2004" name="Genome Res.">
        <title>The status, quality, and expansion of the NIH full-length cDNA project: the Mammalian Gene Collection (MGC).</title>
        <authorList>
            <consortium name="The MGC Project Team"/>
        </authorList>
    </citation>
    <scope>NUCLEOTIDE SEQUENCE [LARGE SCALE MRNA] (ISOFORM 1)</scope>
    <source>
        <tissue>Brain</tissue>
    </source>
</reference>
<feature type="signal peptide" evidence="1">
    <location>
        <begin position="1"/>
        <end position="17"/>
    </location>
</feature>
<feature type="chain" id="PRO_0000284628" description="Protein FAM187B">
    <location>
        <begin position="18"/>
        <end position="358"/>
    </location>
</feature>
<feature type="topological domain" description="Extracellular" evidence="1">
    <location>
        <begin position="18"/>
        <end position="322"/>
    </location>
</feature>
<feature type="transmembrane region" description="Helical" evidence="1">
    <location>
        <begin position="323"/>
        <end position="343"/>
    </location>
</feature>
<feature type="topological domain" description="Cytoplasmic" evidence="1">
    <location>
        <begin position="344"/>
        <end position="358"/>
    </location>
</feature>
<feature type="glycosylation site" description="N-linked (GlcNAc...) asparagine" evidence="1">
    <location>
        <position position="127"/>
    </location>
</feature>
<feature type="splice variant" id="VSP_024580" description="In isoform 2." evidence="2">
    <location>
        <begin position="1"/>
        <end position="263"/>
    </location>
</feature>
<sequence>MLATLWLVGLSLPMLWAQRLISCPYKNVCQYALLSGSDVILQCNYPKALWYFSSSLEDKLSLVNSKPDGRVLPGSDLQLSDPKPSQTGLYRCLDNHKARLVEYEIDFQNIALLHITHKDLGQEPMGNESMNLGGKVLVFTRWDPWQDCNRCQKPGERKRLGYCYVEEPQEKPMPCWLYLREEKVTNSRLRPELQLQACQVPCDTATETNQPYFVFDTYLLDKPNSNARLKCPLASIYRPVHWEADNSPLTWQDQLSGQTVSTIMDLHSGGQHLKVFQPATYRCFVEQELIAQFNPTERQSKAQNPWQPRIQPDKADSVLRRLKLMVLSISVLAVGGLLCKVVFRPVCGKKRSQVLLVK</sequence>
<organism>
    <name type="scientific">Mus musculus</name>
    <name type="common">Mouse</name>
    <dbReference type="NCBI Taxonomy" id="10090"/>
    <lineage>
        <taxon>Eukaryota</taxon>
        <taxon>Metazoa</taxon>
        <taxon>Chordata</taxon>
        <taxon>Craniata</taxon>
        <taxon>Vertebrata</taxon>
        <taxon>Euteleostomi</taxon>
        <taxon>Mammalia</taxon>
        <taxon>Eutheria</taxon>
        <taxon>Euarchontoglires</taxon>
        <taxon>Glires</taxon>
        <taxon>Rodentia</taxon>
        <taxon>Myomorpha</taxon>
        <taxon>Muroidea</taxon>
        <taxon>Muridae</taxon>
        <taxon>Murinae</taxon>
        <taxon>Mus</taxon>
        <taxon>Mus</taxon>
    </lineage>
</organism>
<evidence type="ECO:0000255" key="1"/>
<evidence type="ECO:0000303" key="2">
    <source>
    </source>
</evidence>
<evidence type="ECO:0000305" key="3"/>